<accession>B3QBW5</accession>
<organism>
    <name type="scientific">Rhodopseudomonas palustris (strain TIE-1)</name>
    <dbReference type="NCBI Taxonomy" id="395960"/>
    <lineage>
        <taxon>Bacteria</taxon>
        <taxon>Pseudomonadati</taxon>
        <taxon>Pseudomonadota</taxon>
        <taxon>Alphaproteobacteria</taxon>
        <taxon>Hyphomicrobiales</taxon>
        <taxon>Nitrobacteraceae</taxon>
        <taxon>Rhodopseudomonas</taxon>
    </lineage>
</organism>
<sequence length="177" mass="19404">MSRVGKKPVTVPSGVTATVEGQTVKMKGPKGQLQFVVHDDVDVKFEDGAVKVAPRHETNRARALYGTARAQIANLVEGVTKGFEKKLEITGVGYRAAMQGKKLQLALGYSHDVLYDIPEGITITVPKPTEINVVGIDPQKVGQVAAEIRDYRPPEPYKGKGVRYADEFIFRKEGKKK</sequence>
<comment type="function">
    <text evidence="1">This protein binds to the 23S rRNA, and is important in its secondary structure. It is located near the subunit interface in the base of the L7/L12 stalk, and near the tRNA binding site of the peptidyltransferase center.</text>
</comment>
<comment type="subunit">
    <text evidence="1">Part of the 50S ribosomal subunit.</text>
</comment>
<comment type="similarity">
    <text evidence="1">Belongs to the universal ribosomal protein uL6 family.</text>
</comment>
<protein>
    <recommendedName>
        <fullName evidence="1">Large ribosomal subunit protein uL6</fullName>
    </recommendedName>
    <alternativeName>
        <fullName evidence="2">50S ribosomal protein L6</fullName>
    </alternativeName>
</protein>
<proteinExistence type="inferred from homology"/>
<keyword id="KW-0687">Ribonucleoprotein</keyword>
<keyword id="KW-0689">Ribosomal protein</keyword>
<keyword id="KW-0694">RNA-binding</keyword>
<keyword id="KW-0699">rRNA-binding</keyword>
<reference key="1">
    <citation type="submission" date="2008-05" db="EMBL/GenBank/DDBJ databases">
        <title>Complete sequence of Rhodopseudomonas palustris TIE-1.</title>
        <authorList>
            <consortium name="US DOE Joint Genome Institute"/>
            <person name="Lucas S."/>
            <person name="Copeland A."/>
            <person name="Lapidus A."/>
            <person name="Glavina del Rio T."/>
            <person name="Dalin E."/>
            <person name="Tice H."/>
            <person name="Pitluck S."/>
            <person name="Chain P."/>
            <person name="Malfatti S."/>
            <person name="Shin M."/>
            <person name="Vergez L."/>
            <person name="Lang D."/>
            <person name="Schmutz J."/>
            <person name="Larimer F."/>
            <person name="Land M."/>
            <person name="Hauser L."/>
            <person name="Kyrpides N."/>
            <person name="Mikhailova N."/>
            <person name="Emerson D."/>
            <person name="Newman D.K."/>
            <person name="Roden E."/>
            <person name="Richardson P."/>
        </authorList>
    </citation>
    <scope>NUCLEOTIDE SEQUENCE [LARGE SCALE GENOMIC DNA]</scope>
    <source>
        <strain>TIE-1</strain>
    </source>
</reference>
<dbReference type="EMBL" id="CP001096">
    <property type="protein sequence ID" value="ACF02152.1"/>
    <property type="molecule type" value="Genomic_DNA"/>
</dbReference>
<dbReference type="RefSeq" id="WP_011158780.1">
    <property type="nucleotide sequence ID" value="NC_011004.1"/>
</dbReference>
<dbReference type="SMR" id="B3QBW5"/>
<dbReference type="GeneID" id="66894321"/>
<dbReference type="KEGG" id="rpt:Rpal_3652"/>
<dbReference type="HOGENOM" id="CLU_065464_1_2_5"/>
<dbReference type="OrthoDB" id="9805007at2"/>
<dbReference type="Proteomes" id="UP000001725">
    <property type="component" value="Chromosome"/>
</dbReference>
<dbReference type="GO" id="GO:0022625">
    <property type="term" value="C:cytosolic large ribosomal subunit"/>
    <property type="evidence" value="ECO:0007669"/>
    <property type="project" value="TreeGrafter"/>
</dbReference>
<dbReference type="GO" id="GO:0019843">
    <property type="term" value="F:rRNA binding"/>
    <property type="evidence" value="ECO:0007669"/>
    <property type="project" value="UniProtKB-UniRule"/>
</dbReference>
<dbReference type="GO" id="GO:0003735">
    <property type="term" value="F:structural constituent of ribosome"/>
    <property type="evidence" value="ECO:0007669"/>
    <property type="project" value="InterPro"/>
</dbReference>
<dbReference type="GO" id="GO:0002181">
    <property type="term" value="P:cytoplasmic translation"/>
    <property type="evidence" value="ECO:0007669"/>
    <property type="project" value="TreeGrafter"/>
</dbReference>
<dbReference type="FunFam" id="3.90.930.12:FF:000001">
    <property type="entry name" value="50S ribosomal protein L6"/>
    <property type="match status" value="1"/>
</dbReference>
<dbReference type="FunFam" id="3.90.930.12:FF:000002">
    <property type="entry name" value="50S ribosomal protein L6"/>
    <property type="match status" value="1"/>
</dbReference>
<dbReference type="Gene3D" id="3.90.930.12">
    <property type="entry name" value="Ribosomal protein L6, alpha-beta domain"/>
    <property type="match status" value="2"/>
</dbReference>
<dbReference type="HAMAP" id="MF_01365_B">
    <property type="entry name" value="Ribosomal_uL6_B"/>
    <property type="match status" value="1"/>
</dbReference>
<dbReference type="InterPro" id="IPR000702">
    <property type="entry name" value="Ribosomal_uL6-like"/>
</dbReference>
<dbReference type="InterPro" id="IPR036789">
    <property type="entry name" value="Ribosomal_uL6-like_a/b-dom_sf"/>
</dbReference>
<dbReference type="InterPro" id="IPR020040">
    <property type="entry name" value="Ribosomal_uL6_a/b-dom"/>
</dbReference>
<dbReference type="InterPro" id="IPR019906">
    <property type="entry name" value="Ribosomal_uL6_bac-type"/>
</dbReference>
<dbReference type="InterPro" id="IPR002358">
    <property type="entry name" value="Ribosomal_uL6_CS"/>
</dbReference>
<dbReference type="NCBIfam" id="TIGR03654">
    <property type="entry name" value="L6_bact"/>
    <property type="match status" value="1"/>
</dbReference>
<dbReference type="PANTHER" id="PTHR11655">
    <property type="entry name" value="60S/50S RIBOSOMAL PROTEIN L6/L9"/>
    <property type="match status" value="1"/>
</dbReference>
<dbReference type="PANTHER" id="PTHR11655:SF14">
    <property type="entry name" value="LARGE RIBOSOMAL SUBUNIT PROTEIN UL6M"/>
    <property type="match status" value="1"/>
</dbReference>
<dbReference type="Pfam" id="PF00347">
    <property type="entry name" value="Ribosomal_L6"/>
    <property type="match status" value="2"/>
</dbReference>
<dbReference type="PIRSF" id="PIRSF002162">
    <property type="entry name" value="Ribosomal_L6"/>
    <property type="match status" value="1"/>
</dbReference>
<dbReference type="PRINTS" id="PR00059">
    <property type="entry name" value="RIBOSOMALL6"/>
</dbReference>
<dbReference type="SUPFAM" id="SSF56053">
    <property type="entry name" value="Ribosomal protein L6"/>
    <property type="match status" value="2"/>
</dbReference>
<dbReference type="PROSITE" id="PS00525">
    <property type="entry name" value="RIBOSOMAL_L6_1"/>
    <property type="match status" value="1"/>
</dbReference>
<name>RL6_RHOPT</name>
<feature type="chain" id="PRO_1000144038" description="Large ribosomal subunit protein uL6">
    <location>
        <begin position="1"/>
        <end position="177"/>
    </location>
</feature>
<evidence type="ECO:0000255" key="1">
    <source>
        <dbReference type="HAMAP-Rule" id="MF_01365"/>
    </source>
</evidence>
<evidence type="ECO:0000305" key="2"/>
<gene>
    <name evidence="1" type="primary">rplF</name>
    <name type="ordered locus">Rpal_3652</name>
</gene>